<dbReference type="EMBL" id="AE017262">
    <property type="protein sequence ID" value="AAT04159.1"/>
    <property type="molecule type" value="Genomic_DNA"/>
</dbReference>
<dbReference type="RefSeq" id="WP_003722493.1">
    <property type="nucleotide sequence ID" value="NC_002973.6"/>
</dbReference>
<dbReference type="SMR" id="Q71ZV5"/>
<dbReference type="GeneID" id="93239243"/>
<dbReference type="KEGG" id="lmf:LMOf2365_1384"/>
<dbReference type="HOGENOM" id="CLU_097103_3_0_9"/>
<dbReference type="UniPathway" id="UPA00068"/>
<dbReference type="GO" id="GO:0005737">
    <property type="term" value="C:cytoplasm"/>
    <property type="evidence" value="ECO:0007669"/>
    <property type="project" value="UniProtKB-SubCell"/>
</dbReference>
<dbReference type="GO" id="GO:0034618">
    <property type="term" value="F:arginine binding"/>
    <property type="evidence" value="ECO:0007669"/>
    <property type="project" value="InterPro"/>
</dbReference>
<dbReference type="GO" id="GO:0003677">
    <property type="term" value="F:DNA binding"/>
    <property type="evidence" value="ECO:0007669"/>
    <property type="project" value="UniProtKB-KW"/>
</dbReference>
<dbReference type="GO" id="GO:0003700">
    <property type="term" value="F:DNA-binding transcription factor activity"/>
    <property type="evidence" value="ECO:0007669"/>
    <property type="project" value="UniProtKB-UniRule"/>
</dbReference>
<dbReference type="GO" id="GO:0006526">
    <property type="term" value="P:L-arginine biosynthetic process"/>
    <property type="evidence" value="ECO:0007669"/>
    <property type="project" value="UniProtKB-UniPathway"/>
</dbReference>
<dbReference type="GO" id="GO:0051259">
    <property type="term" value="P:protein complex oligomerization"/>
    <property type="evidence" value="ECO:0007669"/>
    <property type="project" value="InterPro"/>
</dbReference>
<dbReference type="GO" id="GO:1900079">
    <property type="term" value="P:regulation of arginine biosynthetic process"/>
    <property type="evidence" value="ECO:0007669"/>
    <property type="project" value="UniProtKB-UniRule"/>
</dbReference>
<dbReference type="Gene3D" id="3.30.1360.40">
    <property type="match status" value="1"/>
</dbReference>
<dbReference type="Gene3D" id="1.10.10.10">
    <property type="entry name" value="Winged helix-like DNA-binding domain superfamily/Winged helix DNA-binding domain"/>
    <property type="match status" value="1"/>
</dbReference>
<dbReference type="HAMAP" id="MF_00173">
    <property type="entry name" value="Arg_repressor"/>
    <property type="match status" value="1"/>
</dbReference>
<dbReference type="InterPro" id="IPR001669">
    <property type="entry name" value="Arg_repress"/>
</dbReference>
<dbReference type="InterPro" id="IPR020899">
    <property type="entry name" value="Arg_repress_C"/>
</dbReference>
<dbReference type="InterPro" id="IPR036251">
    <property type="entry name" value="Arg_repress_C_sf"/>
</dbReference>
<dbReference type="InterPro" id="IPR020900">
    <property type="entry name" value="Arg_repress_DNA-bd"/>
</dbReference>
<dbReference type="InterPro" id="IPR036388">
    <property type="entry name" value="WH-like_DNA-bd_sf"/>
</dbReference>
<dbReference type="InterPro" id="IPR036390">
    <property type="entry name" value="WH_DNA-bd_sf"/>
</dbReference>
<dbReference type="NCBIfam" id="TIGR01529">
    <property type="entry name" value="argR_whole"/>
    <property type="match status" value="1"/>
</dbReference>
<dbReference type="NCBIfam" id="NF003281">
    <property type="entry name" value="PRK04280.1"/>
    <property type="match status" value="1"/>
</dbReference>
<dbReference type="PANTHER" id="PTHR34471">
    <property type="entry name" value="ARGININE REPRESSOR"/>
    <property type="match status" value="1"/>
</dbReference>
<dbReference type="PANTHER" id="PTHR34471:SF1">
    <property type="entry name" value="ARGININE REPRESSOR"/>
    <property type="match status" value="1"/>
</dbReference>
<dbReference type="Pfam" id="PF01316">
    <property type="entry name" value="Arg_repressor"/>
    <property type="match status" value="1"/>
</dbReference>
<dbReference type="Pfam" id="PF02863">
    <property type="entry name" value="Arg_repressor_C"/>
    <property type="match status" value="1"/>
</dbReference>
<dbReference type="PRINTS" id="PR01467">
    <property type="entry name" value="ARGREPRESSOR"/>
</dbReference>
<dbReference type="SUPFAM" id="SSF55252">
    <property type="entry name" value="C-terminal domain of arginine repressor"/>
    <property type="match status" value="1"/>
</dbReference>
<dbReference type="SUPFAM" id="SSF46785">
    <property type="entry name" value="Winged helix' DNA-binding domain"/>
    <property type="match status" value="1"/>
</dbReference>
<reference key="1">
    <citation type="journal article" date="2004" name="Nucleic Acids Res.">
        <title>Whole genome comparisons of serotype 4b and 1/2a strains of the food-borne pathogen Listeria monocytogenes reveal new insights into the core genome components of this species.</title>
        <authorList>
            <person name="Nelson K.E."/>
            <person name="Fouts D.E."/>
            <person name="Mongodin E.F."/>
            <person name="Ravel J."/>
            <person name="DeBoy R.T."/>
            <person name="Kolonay J.F."/>
            <person name="Rasko D.A."/>
            <person name="Angiuoli S.V."/>
            <person name="Gill S.R."/>
            <person name="Paulsen I.T."/>
            <person name="Peterson J.D."/>
            <person name="White O."/>
            <person name="Nelson W.C."/>
            <person name="Nierman W.C."/>
            <person name="Beanan M.J."/>
            <person name="Brinkac L.M."/>
            <person name="Daugherty S.C."/>
            <person name="Dodson R.J."/>
            <person name="Durkin A.S."/>
            <person name="Madupu R."/>
            <person name="Haft D.H."/>
            <person name="Selengut J."/>
            <person name="Van Aken S.E."/>
            <person name="Khouri H.M."/>
            <person name="Fedorova N."/>
            <person name="Forberger H.A."/>
            <person name="Tran B."/>
            <person name="Kathariou S."/>
            <person name="Wonderling L.D."/>
            <person name="Uhlich G.A."/>
            <person name="Bayles D.O."/>
            <person name="Luchansky J.B."/>
            <person name="Fraser C.M."/>
        </authorList>
    </citation>
    <scope>NUCLEOTIDE SEQUENCE [LARGE SCALE GENOMIC DNA]</scope>
    <source>
        <strain>F2365</strain>
    </source>
</reference>
<protein>
    <recommendedName>
        <fullName evidence="1">Arginine repressor</fullName>
    </recommendedName>
</protein>
<sequence length="149" mass="16778">MNKGHRHIIIRELITSNEIDTQEDLVELLLERDVKVTQATVSRDIKELHLVKVPTQTGGYKYSLPADNSFNPHQKLKRALIDCFIGIDNVQFMIILKVMPGNGNSVGALIDNLDWPEKAGTICGDDTCLIICRSEENAKTLTDRFIDML</sequence>
<name>ARGR_LISMF</name>
<accession>Q71ZV5</accession>
<feature type="chain" id="PRO_0000205098" description="Arginine repressor">
    <location>
        <begin position="1"/>
        <end position="149"/>
    </location>
</feature>
<keyword id="KW-0028">Amino-acid biosynthesis</keyword>
<keyword id="KW-0055">Arginine biosynthesis</keyword>
<keyword id="KW-0963">Cytoplasm</keyword>
<keyword id="KW-0238">DNA-binding</keyword>
<keyword id="KW-0678">Repressor</keyword>
<keyword id="KW-0804">Transcription</keyword>
<keyword id="KW-0805">Transcription regulation</keyword>
<comment type="function">
    <text evidence="1">Regulates arginine biosynthesis genes.</text>
</comment>
<comment type="pathway">
    <text>Amino-acid biosynthesis; L-arginine biosynthesis [regulation].</text>
</comment>
<comment type="subcellular location">
    <subcellularLocation>
        <location evidence="1">Cytoplasm</location>
    </subcellularLocation>
</comment>
<comment type="similarity">
    <text evidence="1">Belongs to the ArgR family.</text>
</comment>
<evidence type="ECO:0000255" key="1">
    <source>
        <dbReference type="HAMAP-Rule" id="MF_00173"/>
    </source>
</evidence>
<gene>
    <name evidence="1" type="primary">argR</name>
    <name type="ordered locus">LMOf2365_1384</name>
</gene>
<organism>
    <name type="scientific">Listeria monocytogenes serotype 4b (strain F2365)</name>
    <dbReference type="NCBI Taxonomy" id="265669"/>
    <lineage>
        <taxon>Bacteria</taxon>
        <taxon>Bacillati</taxon>
        <taxon>Bacillota</taxon>
        <taxon>Bacilli</taxon>
        <taxon>Bacillales</taxon>
        <taxon>Listeriaceae</taxon>
        <taxon>Listeria</taxon>
    </lineage>
</organism>
<proteinExistence type="inferred from homology"/>